<keyword id="KW-0067">ATP-binding</keyword>
<keyword id="KW-0227">DNA damage</keyword>
<keyword id="KW-0234">DNA repair</keyword>
<keyword id="KW-0238">DNA-binding</keyword>
<keyword id="KW-0547">Nucleotide-binding</keyword>
<keyword id="KW-1185">Reference proteome</keyword>
<name>MUTS_ACTSZ</name>
<comment type="function">
    <text evidence="1">This protein is involved in the repair of mismatches in DNA. It is possible that it carries out the mismatch recognition step. This protein has a weak ATPase activity.</text>
</comment>
<comment type="similarity">
    <text evidence="1">Belongs to the DNA mismatch repair MutS family.</text>
</comment>
<reference key="1">
    <citation type="journal article" date="2010" name="BMC Genomics">
        <title>A genomic perspective on the potential of Actinobacillus succinogenes for industrial succinate production.</title>
        <authorList>
            <person name="McKinlay J.B."/>
            <person name="Laivenieks M."/>
            <person name="Schindler B.D."/>
            <person name="McKinlay A.A."/>
            <person name="Siddaramappa S."/>
            <person name="Challacombe J.F."/>
            <person name="Lowry S.R."/>
            <person name="Clum A."/>
            <person name="Lapidus A.L."/>
            <person name="Burkhart K.B."/>
            <person name="Harkins V."/>
            <person name="Vieille C."/>
        </authorList>
    </citation>
    <scope>NUCLEOTIDE SEQUENCE [LARGE SCALE GENOMIC DNA]</scope>
    <source>
        <strain>ATCC 55618 / DSM 22257 / CCUG 43843 / 130Z</strain>
    </source>
</reference>
<sequence>MPNFDAHTPMMKQYLTIKAENPDILLFYRMGDFYEMFYDDAKKAAALLDISLTKRGQSAGRPIPMAGVPYHAVEGYLAKLVQLGESVAICEQIGDPAASKGPVERKIVRIVTPGTVSDENLLPERQDNLLVAVYQEKDRFGLASLDMSSGRFQIAEAENAETLHAELQRLQPAELLYSEDFSEMAIIEQTKGLRRRPIWEFELGTAVQLLNRQFGTKDLKAFGVEKAVLGLCAAGCLFQYAKETQRTALPHIKSISLVQNSDTVQLDAATRRNLELTRNLSGGTENTLASVLDKCVTPMGSRLLKRWIHQPIRKIQKLRQRQQTIAAILQDDLIDELQPLLRQVGDMERILARVALRTARPRDLTRLRTALEQLPQLQQIIKTLQNLTALSQPMGEFAELCDLLQRAIIDSPPLLIRDGGVIAPGYHAELDEWRSLADGATQYLADLERRERESTGIDTLKIGYNAVHGYYIQISQGQAHNAPMHYVRRQTLKNAERYIIPELKTYEDKVLKAKGAALALEKQLYEEIFDQLLPHLAALQLSSMTLAELDVLTNLAERAETLNYVCPEFSPEIGVEIQNGRHPVVEQVLKEPFIANPVCLNPQRRLLVITGPNMGGKSTYMRQTALITLMAYMGGFVPAERAVIGPIDRIFTRIGASDDLASGRSTFMVEMTEMANILHQATADSLVLIDEIGRGTSTYDGLSLAWACAEWLAKKLRSLTLFATHYFELTVLPEQFAGTANVHLDALEHDNTIAFMHAVQDGAASKSYGLAVAALAGVPQQVIKLAKQKLAQLEKLSAQSADQKLQDLRTLHQMQGELALMEEDDGKNAALEMLEKLDPDELSPKQALAYLYQLKTLL</sequence>
<accession>A6VL76</accession>
<feature type="chain" id="PRO_1000075551" description="DNA mismatch repair protein MutS">
    <location>
        <begin position="1"/>
        <end position="858"/>
    </location>
</feature>
<feature type="binding site" evidence="1">
    <location>
        <begin position="611"/>
        <end position="618"/>
    </location>
    <ligand>
        <name>ATP</name>
        <dbReference type="ChEBI" id="CHEBI:30616"/>
    </ligand>
</feature>
<dbReference type="EMBL" id="CP000746">
    <property type="protein sequence ID" value="ABR73723.1"/>
    <property type="molecule type" value="Genomic_DNA"/>
</dbReference>
<dbReference type="RefSeq" id="WP_011978998.1">
    <property type="nucleotide sequence ID" value="NC_009655.1"/>
</dbReference>
<dbReference type="SMR" id="A6VL76"/>
<dbReference type="STRING" id="339671.Asuc_0345"/>
<dbReference type="KEGG" id="asu:Asuc_0345"/>
<dbReference type="eggNOG" id="COG0249">
    <property type="taxonomic scope" value="Bacteria"/>
</dbReference>
<dbReference type="HOGENOM" id="CLU_002472_4_0_6"/>
<dbReference type="OrthoDB" id="9802448at2"/>
<dbReference type="Proteomes" id="UP000001114">
    <property type="component" value="Chromosome"/>
</dbReference>
<dbReference type="GO" id="GO:0005829">
    <property type="term" value="C:cytosol"/>
    <property type="evidence" value="ECO:0007669"/>
    <property type="project" value="TreeGrafter"/>
</dbReference>
<dbReference type="GO" id="GO:0005524">
    <property type="term" value="F:ATP binding"/>
    <property type="evidence" value="ECO:0007669"/>
    <property type="project" value="UniProtKB-UniRule"/>
</dbReference>
<dbReference type="GO" id="GO:0140664">
    <property type="term" value="F:ATP-dependent DNA damage sensor activity"/>
    <property type="evidence" value="ECO:0007669"/>
    <property type="project" value="InterPro"/>
</dbReference>
<dbReference type="GO" id="GO:0003684">
    <property type="term" value="F:damaged DNA binding"/>
    <property type="evidence" value="ECO:0007669"/>
    <property type="project" value="UniProtKB-UniRule"/>
</dbReference>
<dbReference type="GO" id="GO:0030983">
    <property type="term" value="F:mismatched DNA binding"/>
    <property type="evidence" value="ECO:0007669"/>
    <property type="project" value="InterPro"/>
</dbReference>
<dbReference type="GO" id="GO:0006298">
    <property type="term" value="P:mismatch repair"/>
    <property type="evidence" value="ECO:0007669"/>
    <property type="project" value="UniProtKB-UniRule"/>
</dbReference>
<dbReference type="CDD" id="cd03284">
    <property type="entry name" value="ABC_MutS1"/>
    <property type="match status" value="1"/>
</dbReference>
<dbReference type="FunFam" id="1.10.1420.10:FF:000002">
    <property type="entry name" value="DNA mismatch repair protein MutS"/>
    <property type="match status" value="1"/>
</dbReference>
<dbReference type="FunFam" id="3.30.420.110:FF:000001">
    <property type="entry name" value="DNA mismatch repair protein MutS"/>
    <property type="match status" value="1"/>
</dbReference>
<dbReference type="FunFam" id="3.40.1170.10:FF:000001">
    <property type="entry name" value="DNA mismatch repair protein MutS"/>
    <property type="match status" value="1"/>
</dbReference>
<dbReference type="FunFam" id="3.40.50.300:FF:000283">
    <property type="entry name" value="DNA mismatch repair protein MutS"/>
    <property type="match status" value="1"/>
</dbReference>
<dbReference type="Gene3D" id="1.10.1420.10">
    <property type="match status" value="2"/>
</dbReference>
<dbReference type="Gene3D" id="6.10.140.430">
    <property type="match status" value="1"/>
</dbReference>
<dbReference type="Gene3D" id="3.40.1170.10">
    <property type="entry name" value="DNA repair protein MutS, domain I"/>
    <property type="match status" value="1"/>
</dbReference>
<dbReference type="Gene3D" id="3.30.420.110">
    <property type="entry name" value="MutS, connector domain"/>
    <property type="match status" value="1"/>
</dbReference>
<dbReference type="Gene3D" id="3.40.50.300">
    <property type="entry name" value="P-loop containing nucleotide triphosphate hydrolases"/>
    <property type="match status" value="1"/>
</dbReference>
<dbReference type="HAMAP" id="MF_00096">
    <property type="entry name" value="MutS"/>
    <property type="match status" value="1"/>
</dbReference>
<dbReference type="InterPro" id="IPR005748">
    <property type="entry name" value="DNA_mismatch_repair_MutS"/>
</dbReference>
<dbReference type="InterPro" id="IPR007695">
    <property type="entry name" value="DNA_mismatch_repair_MutS-lik_N"/>
</dbReference>
<dbReference type="InterPro" id="IPR017261">
    <property type="entry name" value="DNA_mismatch_repair_MutS/MSH"/>
</dbReference>
<dbReference type="InterPro" id="IPR000432">
    <property type="entry name" value="DNA_mismatch_repair_MutS_C"/>
</dbReference>
<dbReference type="InterPro" id="IPR007861">
    <property type="entry name" value="DNA_mismatch_repair_MutS_clamp"/>
</dbReference>
<dbReference type="InterPro" id="IPR007696">
    <property type="entry name" value="DNA_mismatch_repair_MutS_core"/>
</dbReference>
<dbReference type="InterPro" id="IPR016151">
    <property type="entry name" value="DNA_mismatch_repair_MutS_N"/>
</dbReference>
<dbReference type="InterPro" id="IPR036187">
    <property type="entry name" value="DNA_mismatch_repair_MutS_sf"/>
</dbReference>
<dbReference type="InterPro" id="IPR007860">
    <property type="entry name" value="DNA_mmatch_repair_MutS_con_dom"/>
</dbReference>
<dbReference type="InterPro" id="IPR045076">
    <property type="entry name" value="MutS"/>
</dbReference>
<dbReference type="InterPro" id="IPR036678">
    <property type="entry name" value="MutS_con_dom_sf"/>
</dbReference>
<dbReference type="InterPro" id="IPR027417">
    <property type="entry name" value="P-loop_NTPase"/>
</dbReference>
<dbReference type="NCBIfam" id="TIGR01070">
    <property type="entry name" value="mutS1"/>
    <property type="match status" value="1"/>
</dbReference>
<dbReference type="NCBIfam" id="NF003810">
    <property type="entry name" value="PRK05399.1"/>
    <property type="match status" value="1"/>
</dbReference>
<dbReference type="PANTHER" id="PTHR11361:SF34">
    <property type="entry name" value="DNA MISMATCH REPAIR PROTEIN MSH1, MITOCHONDRIAL"/>
    <property type="match status" value="1"/>
</dbReference>
<dbReference type="PANTHER" id="PTHR11361">
    <property type="entry name" value="DNA MISMATCH REPAIR PROTEIN MUTS FAMILY MEMBER"/>
    <property type="match status" value="1"/>
</dbReference>
<dbReference type="Pfam" id="PF01624">
    <property type="entry name" value="MutS_I"/>
    <property type="match status" value="1"/>
</dbReference>
<dbReference type="Pfam" id="PF05188">
    <property type="entry name" value="MutS_II"/>
    <property type="match status" value="1"/>
</dbReference>
<dbReference type="Pfam" id="PF05192">
    <property type="entry name" value="MutS_III"/>
    <property type="match status" value="1"/>
</dbReference>
<dbReference type="Pfam" id="PF05190">
    <property type="entry name" value="MutS_IV"/>
    <property type="match status" value="1"/>
</dbReference>
<dbReference type="Pfam" id="PF00488">
    <property type="entry name" value="MutS_V"/>
    <property type="match status" value="1"/>
</dbReference>
<dbReference type="PIRSF" id="PIRSF037677">
    <property type="entry name" value="DNA_mis_repair_Msh6"/>
    <property type="match status" value="1"/>
</dbReference>
<dbReference type="SMART" id="SM00534">
    <property type="entry name" value="MUTSac"/>
    <property type="match status" value="1"/>
</dbReference>
<dbReference type="SMART" id="SM00533">
    <property type="entry name" value="MUTSd"/>
    <property type="match status" value="1"/>
</dbReference>
<dbReference type="SUPFAM" id="SSF55271">
    <property type="entry name" value="DNA repair protein MutS, domain I"/>
    <property type="match status" value="1"/>
</dbReference>
<dbReference type="SUPFAM" id="SSF53150">
    <property type="entry name" value="DNA repair protein MutS, domain II"/>
    <property type="match status" value="1"/>
</dbReference>
<dbReference type="SUPFAM" id="SSF48334">
    <property type="entry name" value="DNA repair protein MutS, domain III"/>
    <property type="match status" value="1"/>
</dbReference>
<dbReference type="SUPFAM" id="SSF52540">
    <property type="entry name" value="P-loop containing nucleoside triphosphate hydrolases"/>
    <property type="match status" value="1"/>
</dbReference>
<dbReference type="PROSITE" id="PS00486">
    <property type="entry name" value="DNA_MISMATCH_REPAIR_2"/>
    <property type="match status" value="1"/>
</dbReference>
<evidence type="ECO:0000255" key="1">
    <source>
        <dbReference type="HAMAP-Rule" id="MF_00096"/>
    </source>
</evidence>
<protein>
    <recommendedName>
        <fullName evidence="1">DNA mismatch repair protein MutS</fullName>
    </recommendedName>
</protein>
<gene>
    <name evidence="1" type="primary">mutS</name>
    <name type="ordered locus">Asuc_0345</name>
</gene>
<proteinExistence type="inferred from homology"/>
<organism>
    <name type="scientific">Actinobacillus succinogenes (strain ATCC 55618 / DSM 22257 / CCUG 43843 / 130Z)</name>
    <dbReference type="NCBI Taxonomy" id="339671"/>
    <lineage>
        <taxon>Bacteria</taxon>
        <taxon>Pseudomonadati</taxon>
        <taxon>Pseudomonadota</taxon>
        <taxon>Gammaproteobacteria</taxon>
        <taxon>Pasteurellales</taxon>
        <taxon>Pasteurellaceae</taxon>
        <taxon>Actinobacillus</taxon>
    </lineage>
</organism>